<organism>
    <name type="scientific">Methanobrevibacter smithii (strain ATCC 35061 / DSM 861 / OCM 144 / PS)</name>
    <dbReference type="NCBI Taxonomy" id="420247"/>
    <lineage>
        <taxon>Archaea</taxon>
        <taxon>Methanobacteriati</taxon>
        <taxon>Methanobacteriota</taxon>
        <taxon>Methanomada group</taxon>
        <taxon>Methanobacteria</taxon>
        <taxon>Methanobacteriales</taxon>
        <taxon>Methanobacteriaceae</taxon>
        <taxon>Methanobrevibacter</taxon>
    </lineage>
</organism>
<comment type="function">
    <text evidence="1">Involved in DNA repair and in homologous recombination. Binds and assemble on single-stranded DNA to form a nucleoprotein filament. Hydrolyzes ATP in a ssDNA-dependent manner and promotes DNA strand exchange between homologous DNA molecules.</text>
</comment>
<comment type="similarity">
    <text evidence="1">Belongs to the eukaryotic RecA-like protein family.</text>
</comment>
<sequence length="311" mass="34258">MVELEDLPSVGEKTAEKLRDAGFADMMRLATATPKELSVKAEIGEGVAEKVIEAARKSEKIDFETAYDVLERRRDVGHISVGSEGFNDLIGGGIETQSITEVFGEFGSGKSQISHELAVTVQLPPEKGGLDGECVFIDTENTFRPERIEQIANGFELDIDEVLQKIHVARAFNSSHQILMAEKINELIQQGNNIKLVIVDSLMAHFRAEYVGRESLAVRQQKLNQHLHALQQIANTYNVAVFITNQVQAKPDSFFGSPTKAIGGHVLGHASTYRIWLKKGLAGKRIARLVDSPHLPEGECVFKIKTEGIVD</sequence>
<reference key="1">
    <citation type="journal article" date="2007" name="Proc. Natl. Acad. Sci. U.S.A.">
        <title>Genomic and metabolic adaptations of Methanobrevibacter smithii to the human gut.</title>
        <authorList>
            <person name="Samuel B.S."/>
            <person name="Hansen E.E."/>
            <person name="Manchester J.K."/>
            <person name="Coutinho P.M."/>
            <person name="Henrissat B."/>
            <person name="Fulton R."/>
            <person name="Latreille P."/>
            <person name="Kim K."/>
            <person name="Wilson R.K."/>
            <person name="Gordon J.I."/>
        </authorList>
    </citation>
    <scope>NUCLEOTIDE SEQUENCE [LARGE SCALE GENOMIC DNA]</scope>
    <source>
        <strain>ATCC 35061 / DSM 861 / OCM 144 / PS</strain>
    </source>
</reference>
<proteinExistence type="inferred from homology"/>
<protein>
    <recommendedName>
        <fullName evidence="1">DNA repair and recombination protein RadA</fullName>
    </recommendedName>
</protein>
<evidence type="ECO:0000255" key="1">
    <source>
        <dbReference type="HAMAP-Rule" id="MF_00348"/>
    </source>
</evidence>
<keyword id="KW-0067">ATP-binding</keyword>
<keyword id="KW-0227">DNA damage</keyword>
<keyword id="KW-0233">DNA recombination</keyword>
<keyword id="KW-0238">DNA-binding</keyword>
<keyword id="KW-0547">Nucleotide-binding</keyword>
<gene>
    <name evidence="1" type="primary">radA</name>
    <name type="ordered locus">Msm_1333</name>
</gene>
<name>RADA_METS3</name>
<feature type="chain" id="PRO_1000048390" description="DNA repair and recombination protein RadA">
    <location>
        <begin position="1"/>
        <end position="311"/>
    </location>
</feature>
<feature type="binding site" evidence="1">
    <location>
        <begin position="104"/>
        <end position="111"/>
    </location>
    <ligand>
        <name>ATP</name>
        <dbReference type="ChEBI" id="CHEBI:30616"/>
    </ligand>
</feature>
<accession>A5UMW0</accession>
<dbReference type="EMBL" id="CP000678">
    <property type="protein sequence ID" value="ABQ87538.1"/>
    <property type="molecule type" value="Genomic_DNA"/>
</dbReference>
<dbReference type="RefSeq" id="WP_004036279.1">
    <property type="nucleotide sequence ID" value="NZ_CP117965.1"/>
</dbReference>
<dbReference type="SMR" id="A5UMW0"/>
<dbReference type="STRING" id="420247.Msm_1333"/>
<dbReference type="EnsemblBacteria" id="ABQ87538">
    <property type="protein sequence ID" value="ABQ87538"/>
    <property type="gene ID" value="Msm_1333"/>
</dbReference>
<dbReference type="GeneID" id="78817985"/>
<dbReference type="KEGG" id="msi:Msm_1333"/>
<dbReference type="PATRIC" id="fig|420247.28.peg.1329"/>
<dbReference type="eggNOG" id="arCOG00415">
    <property type="taxonomic scope" value="Archaea"/>
</dbReference>
<dbReference type="HOGENOM" id="CLU_041732_0_0_2"/>
<dbReference type="Proteomes" id="UP000001992">
    <property type="component" value="Chromosome"/>
</dbReference>
<dbReference type="GO" id="GO:0005524">
    <property type="term" value="F:ATP binding"/>
    <property type="evidence" value="ECO:0007669"/>
    <property type="project" value="UniProtKB-UniRule"/>
</dbReference>
<dbReference type="GO" id="GO:0016887">
    <property type="term" value="F:ATP hydrolysis activity"/>
    <property type="evidence" value="ECO:0007669"/>
    <property type="project" value="InterPro"/>
</dbReference>
<dbReference type="GO" id="GO:0140664">
    <property type="term" value="F:ATP-dependent DNA damage sensor activity"/>
    <property type="evidence" value="ECO:0007669"/>
    <property type="project" value="InterPro"/>
</dbReference>
<dbReference type="GO" id="GO:0003684">
    <property type="term" value="F:damaged DNA binding"/>
    <property type="evidence" value="ECO:0007669"/>
    <property type="project" value="UniProtKB-UniRule"/>
</dbReference>
<dbReference type="GO" id="GO:0006310">
    <property type="term" value="P:DNA recombination"/>
    <property type="evidence" value="ECO:0007669"/>
    <property type="project" value="UniProtKB-UniRule"/>
</dbReference>
<dbReference type="GO" id="GO:0006281">
    <property type="term" value="P:DNA repair"/>
    <property type="evidence" value="ECO:0007669"/>
    <property type="project" value="UniProtKB-UniRule"/>
</dbReference>
<dbReference type="CDD" id="cd19515">
    <property type="entry name" value="archRadA"/>
    <property type="match status" value="1"/>
</dbReference>
<dbReference type="FunFam" id="3.40.50.300:FF:002052">
    <property type="entry name" value="DNA repair protein RAD51 homolog"/>
    <property type="match status" value="1"/>
</dbReference>
<dbReference type="Gene3D" id="1.10.150.20">
    <property type="entry name" value="5' to 3' exonuclease, C-terminal subdomain"/>
    <property type="match status" value="1"/>
</dbReference>
<dbReference type="Gene3D" id="3.40.50.300">
    <property type="entry name" value="P-loop containing nucleotide triphosphate hydrolases"/>
    <property type="match status" value="1"/>
</dbReference>
<dbReference type="HAMAP" id="MF_00348">
    <property type="entry name" value="RadA_arch"/>
    <property type="match status" value="1"/>
</dbReference>
<dbReference type="InterPro" id="IPR003593">
    <property type="entry name" value="AAA+_ATPase"/>
</dbReference>
<dbReference type="InterPro" id="IPR013632">
    <property type="entry name" value="DNA_recomb/repair_Rad51_C"/>
</dbReference>
<dbReference type="InterPro" id="IPR011938">
    <property type="entry name" value="DNA_recomb/repair_RadA"/>
</dbReference>
<dbReference type="InterPro" id="IPR016467">
    <property type="entry name" value="DNA_recomb/repair_RecA-like"/>
</dbReference>
<dbReference type="InterPro" id="IPR010995">
    <property type="entry name" value="DNA_repair_Rad51/TF_NusA_a-hlx"/>
</dbReference>
<dbReference type="InterPro" id="IPR003583">
    <property type="entry name" value="Hlx-hairpin-Hlx_DNA-bd_motif"/>
</dbReference>
<dbReference type="InterPro" id="IPR027417">
    <property type="entry name" value="P-loop_NTPase"/>
</dbReference>
<dbReference type="InterPro" id="IPR020588">
    <property type="entry name" value="RecA_ATP-bd"/>
</dbReference>
<dbReference type="InterPro" id="IPR020587">
    <property type="entry name" value="RecA_monomer-monomer_interface"/>
</dbReference>
<dbReference type="NCBIfam" id="NF003301">
    <property type="entry name" value="PRK04301.1"/>
    <property type="match status" value="1"/>
</dbReference>
<dbReference type="NCBIfam" id="TIGR02236">
    <property type="entry name" value="recomb_radA"/>
    <property type="match status" value="1"/>
</dbReference>
<dbReference type="PANTHER" id="PTHR22942:SF30">
    <property type="entry name" value="MEIOTIC RECOMBINATION PROTEIN DMC1_LIM15 HOMOLOG"/>
    <property type="match status" value="1"/>
</dbReference>
<dbReference type="PANTHER" id="PTHR22942">
    <property type="entry name" value="RECA/RAD51/RADA DNA STRAND-PAIRING FAMILY MEMBER"/>
    <property type="match status" value="1"/>
</dbReference>
<dbReference type="Pfam" id="PF14520">
    <property type="entry name" value="HHH_5"/>
    <property type="match status" value="1"/>
</dbReference>
<dbReference type="Pfam" id="PF08423">
    <property type="entry name" value="Rad51"/>
    <property type="match status" value="1"/>
</dbReference>
<dbReference type="PIRSF" id="PIRSF005856">
    <property type="entry name" value="Rad51"/>
    <property type="match status" value="1"/>
</dbReference>
<dbReference type="SMART" id="SM00382">
    <property type="entry name" value="AAA"/>
    <property type="match status" value="1"/>
</dbReference>
<dbReference type="SMART" id="SM00278">
    <property type="entry name" value="HhH1"/>
    <property type="match status" value="2"/>
</dbReference>
<dbReference type="SUPFAM" id="SSF52540">
    <property type="entry name" value="P-loop containing nucleoside triphosphate hydrolases"/>
    <property type="match status" value="1"/>
</dbReference>
<dbReference type="SUPFAM" id="SSF47794">
    <property type="entry name" value="Rad51 N-terminal domain-like"/>
    <property type="match status" value="1"/>
</dbReference>
<dbReference type="PROSITE" id="PS50162">
    <property type="entry name" value="RECA_2"/>
    <property type="match status" value="1"/>
</dbReference>
<dbReference type="PROSITE" id="PS50163">
    <property type="entry name" value="RECA_3"/>
    <property type="match status" value="1"/>
</dbReference>